<organism>
    <name type="scientific">Epstein-Barr virus (strain B95-8)</name>
    <name type="common">HHV-4</name>
    <name type="synonym">Human herpesvirus 4</name>
    <dbReference type="NCBI Taxonomy" id="10377"/>
    <lineage>
        <taxon>Viruses</taxon>
        <taxon>Duplodnaviria</taxon>
        <taxon>Heunggongvirae</taxon>
        <taxon>Peploviricota</taxon>
        <taxon>Herviviricetes</taxon>
        <taxon>Herpesvirales</taxon>
        <taxon>Orthoherpesviridae</taxon>
        <taxon>Gammaherpesvirinae</taxon>
        <taxon>Lymphocryptovirus</taxon>
        <taxon>Lymphocryptovirus humangamma4</taxon>
        <taxon>Epstein-Barr virus (strain GD1)</taxon>
    </lineage>
</organism>
<accession>P03182</accession>
<accession>Q777H0</accession>
<reference key="1">
    <citation type="journal article" date="1984" name="Nature">
        <title>DNA sequence and expression of the B95-8 Epstein-Barr virus genome.</title>
        <authorList>
            <person name="Baer R."/>
            <person name="Bankier A.T."/>
            <person name="Biggin M.D."/>
            <person name="Deininger P.L."/>
            <person name="Farrell P.J."/>
            <person name="Gibson T.J."/>
            <person name="Hatfull G."/>
            <person name="Hudson G.S."/>
            <person name="Satchwell S.C."/>
            <person name="Seguin C."/>
            <person name="Tuffnell P.S."/>
            <person name="Barrell B.G."/>
        </authorList>
    </citation>
    <scope>NUCLEOTIDE SEQUENCE [LARGE SCALE GENOMIC DNA]</scope>
</reference>
<reference key="2">
    <citation type="journal article" date="1987" name="J. Virol.">
        <title>Isolation and characterization of cDNA clones corresponding to transcripts from the BamHI H and F regions of the Epstein-Barr virus genome.</title>
        <authorList>
            <person name="Pfitzner A.J."/>
            <person name="Tsai E.C."/>
            <person name="Strominger J.L."/>
            <person name="Speck S.H."/>
        </authorList>
    </citation>
    <scope>NUCLEOTIDE SEQUENCE [GENOMIC DNA]</scope>
</reference>
<reference key="3">
    <citation type="journal article" date="2007" name="J. Virol.">
        <title>Epstein-Barr virus BHRF1 micro- and stable RNAs during latency III and after induction of replication.</title>
        <authorList>
            <person name="Xing L."/>
            <person name="Kieff E."/>
        </authorList>
    </citation>
    <scope>NUCLEOTIDE SEQUENCE [GENOMIC DNA]</scope>
    <source>
        <strain>Akata</strain>
    </source>
</reference>
<reference key="4">
    <citation type="journal article" date="2003" name="Virology">
        <title>Updated Epstein-Barr virus (EBV) DNA sequence and analysis of a promoter for the BART (CST, BARF0) RNAs of EBV.</title>
        <authorList>
            <person name="de Jesus O."/>
            <person name="Smith P.R."/>
            <person name="Spender L.C."/>
            <person name="Elgueta Karstegl C."/>
            <person name="Niller H.H."/>
            <person name="Huang D."/>
            <person name="Farrell P.J."/>
        </authorList>
    </citation>
    <scope>GENOME REANNOTATION</scope>
</reference>
<reference key="5">
    <citation type="journal article" date="1987" name="Virology">
        <title>Identification of an Epstein-Barr virus early gene encoding a second component of the restricted early antigen complex.</title>
        <authorList>
            <person name="Pearson G.R."/>
            <person name="Luka J."/>
            <person name="Petti L."/>
            <person name="Sample J."/>
            <person name="Birkenbach M."/>
            <person name="Braun D."/>
            <person name="Kieff E."/>
        </authorList>
    </citation>
    <scope>CHARACTERIZATION</scope>
</reference>
<reference key="6">
    <citation type="journal article" date="1997" name="J. Gen. Virol.">
        <title>BHRF1, a viral homologue of the Bcl-2 oncogene, is conserved at both the sequence and functional level in different Epstein-Barr virus isolates.</title>
        <authorList>
            <person name="Khanim F."/>
            <person name="Dawson C."/>
            <person name="Meseda C.A."/>
            <person name="Dawson J."/>
            <person name="Mackett M."/>
            <person name="Young L.S."/>
        </authorList>
    </citation>
    <scope>SUBCELLULAR LOCATION</scope>
</reference>
<reference key="7">
    <citation type="journal article" date="2001" name="J. Biol. Chem.">
        <title>The cellular protein PRA1 modulates the anti-apoptotic activity of Epstein-Barr virus BHRF1, a homologue of Bcl-2, through direct interaction.</title>
        <authorList>
            <person name="Li L.Y."/>
            <person name="Shih H.M."/>
            <person name="Liu M.Y."/>
            <person name="Chen J.Y."/>
        </authorList>
    </citation>
    <scope>INTERACTION WITH HUMAN PRA1</scope>
</reference>
<reference key="8">
    <citation type="journal article" date="2002" name="J. Virol.">
        <title>Epstein-Barr virus BALF1 is a BCL-2-like antagonist of the herpesvirus antiapoptotic BCL-2 proteins.</title>
        <authorList>
            <person name="Bellows D.S."/>
            <person name="Howell M."/>
            <person name="Pearson C."/>
            <person name="Hazlewood S.A."/>
            <person name="Hardwick J.M."/>
        </authorList>
    </citation>
    <scope>FUNCTION</scope>
    <scope>INTERACTION WITH BALF1</scope>
    <scope>SUBCELLULAR LOCATION</scope>
</reference>
<reference key="9">
    <citation type="journal article" date="2006" name="J. Gen. Virol.">
        <title>Human cellular protein VRK2 interacts specifically with Epstein-Barr virus BHRF1, a homologue of Bcl-2, and enhances cell survival.</title>
        <authorList>
            <person name="Li L.Y."/>
            <person name="Liu M.Y."/>
            <person name="Shih H.M."/>
            <person name="Tsai C.H."/>
            <person name="Chen J.Y."/>
        </authorList>
    </citation>
    <scope>INTERACTION WITH HUMAN VRK2</scope>
</reference>
<reference key="10">
    <citation type="journal article" date="2008" name="Cell Death Differ.">
        <title>BH3 domains define selective inhibitory interactions with BHRF-1 and KSHV BCL-2.</title>
        <authorList>
            <person name="Flanagan A.M."/>
            <person name="Letai A."/>
        </authorList>
    </citation>
    <scope>INTERACTION WITH HUMAN BCL2L11</scope>
</reference>
<reference key="11">
    <citation type="journal article" date="2009" name="Proc. Natl. Acad. Sci. U.S.A.">
        <title>The Epstein-Barr virus Bcl-2 homolog, BHRF1, blocks apoptosis by binding to a limited amount of Bim.</title>
        <authorList>
            <person name="Desbien A.L."/>
            <person name="Kappler J.W."/>
            <person name="Marrack P."/>
        </authorList>
    </citation>
    <scope>FUNCTION</scope>
    <scope>INTERACTION WITH HOST BCL2L11</scope>
</reference>
<reference key="12">
    <citation type="journal article" date="2023" name="Biochemistry">
        <title>Epstein-Barr Virus Encoded BCL2, BHRF1, Downregulates Autophagy by Noncanonical Binding of BECN1.</title>
        <authorList>
            <person name="Wyatt S."/>
            <person name="Glover K."/>
            <person name="Dasanna S."/>
            <person name="Lewison M."/>
            <person name="Gonzalez-Garcia M."/>
            <person name="Colbert C.L."/>
            <person name="Sinha S.C."/>
        </authorList>
    </citation>
    <scope>FUNCTION</scope>
    <scope>INTERACTION WITH HOST BECN1</scope>
</reference>
<reference key="13">
    <citation type="journal article" date="2003" name="J. Mol. Biol.">
        <title>Solution structure of the BHRF1 protein from Epstein-Barr virus, a homolog of human Bcl-2.</title>
        <authorList>
            <person name="Huang Q."/>
            <person name="Petros A.M."/>
            <person name="Virgin H.W."/>
            <person name="Fesik S.W."/>
            <person name="Olejniczak E.T."/>
        </authorList>
    </citation>
    <scope>STRUCTURE BY NMR OF 1-160</scope>
</reference>
<reference key="14">
    <citation type="journal article" date="2010" name="PLoS Pathog.">
        <title>Structural basis for apoptosis inhibition by Epstein-Barr virus BHRF1.</title>
        <authorList>
            <person name="Kvansakul M."/>
            <person name="Wei A.H."/>
            <person name="Fletcher J.I."/>
            <person name="Willis S.N."/>
            <person name="Chen L."/>
            <person name="Roberts A.W."/>
            <person name="Huang D.C."/>
            <person name="Colman P.M."/>
        </authorList>
    </citation>
    <scope>X-RAY CRYSTALLOGRAPHY (2.05 ANGSTROMS) OF 1-160</scope>
    <scope>FUNCTION</scope>
    <scope>INTERACTION WITH HOST BCL2L11; BAD AND BBC3</scope>
</reference>
<proteinExistence type="evidence at protein level"/>
<name>EAR_EBVB9</name>
<dbReference type="EMBL" id="M17416">
    <property type="protein sequence ID" value="AAA45873.1"/>
    <property type="molecule type" value="Genomic_DNA"/>
</dbReference>
<dbReference type="EMBL" id="V01555">
    <property type="status" value="NOT_ANNOTATED_CDS"/>
    <property type="molecule type" value="Genomic_DNA"/>
</dbReference>
<dbReference type="EMBL" id="M17293">
    <property type="protein sequence ID" value="AAA45875.1"/>
    <property type="molecule type" value="Genomic_DNA"/>
</dbReference>
<dbReference type="EMBL" id="AJ507799">
    <property type="protein sequence ID" value="CAD53396.1"/>
    <property type="molecule type" value="Genomic_DNA"/>
</dbReference>
<dbReference type="EMBL" id="EF192979">
    <property type="protein sequence ID" value="ABM92330.1"/>
    <property type="molecule type" value="Genomic_DNA"/>
</dbReference>
<dbReference type="PIR" id="C93065">
    <property type="entry name" value="QQBE4"/>
</dbReference>
<dbReference type="RefSeq" id="YP_401646.1">
    <property type="nucleotide sequence ID" value="NC_007605.1"/>
</dbReference>
<dbReference type="PDB" id="1Q59">
    <property type="method" value="NMR"/>
    <property type="chains" value="A=1-160"/>
</dbReference>
<dbReference type="PDB" id="2XPX">
    <property type="method" value="X-ray"/>
    <property type="resolution" value="2.05 A"/>
    <property type="chains" value="A=1-160"/>
</dbReference>
<dbReference type="PDB" id="7P33">
    <property type="method" value="X-ray"/>
    <property type="resolution" value="2.79 A"/>
    <property type="chains" value="A/B/C/D/E=1-160"/>
</dbReference>
<dbReference type="PDB" id="7P9W">
    <property type="method" value="X-ray"/>
    <property type="resolution" value="2.00 A"/>
    <property type="chains" value="A=1-160"/>
</dbReference>
<dbReference type="PDB" id="8SM5">
    <property type="method" value="X-ray"/>
    <property type="resolution" value="2.61 A"/>
    <property type="chains" value="A/C/E/G/I=2-157"/>
</dbReference>
<dbReference type="PDBsum" id="1Q59"/>
<dbReference type="PDBsum" id="2XPX"/>
<dbReference type="PDBsum" id="7P33"/>
<dbReference type="PDBsum" id="7P9W"/>
<dbReference type="PDBsum" id="8SM5"/>
<dbReference type="BMRB" id="P03182"/>
<dbReference type="SMR" id="P03182"/>
<dbReference type="DIP" id="DIP-39168N"/>
<dbReference type="IntAct" id="P03182">
    <property type="interactions" value="149"/>
</dbReference>
<dbReference type="MINT" id="P03182"/>
<dbReference type="DNASU" id="3783706"/>
<dbReference type="GeneID" id="3783706"/>
<dbReference type="KEGG" id="vg:3783706"/>
<dbReference type="EvolutionaryTrace" id="P03182"/>
<dbReference type="Proteomes" id="UP000153037">
    <property type="component" value="Segment"/>
</dbReference>
<dbReference type="GO" id="GO:0033644">
    <property type="term" value="C:host cell membrane"/>
    <property type="evidence" value="ECO:0007669"/>
    <property type="project" value="UniProtKB-SubCell"/>
</dbReference>
<dbReference type="GO" id="GO:0033650">
    <property type="term" value="C:host cell mitochondrion"/>
    <property type="evidence" value="ECO:0007669"/>
    <property type="project" value="UniProtKB-SubCell"/>
</dbReference>
<dbReference type="GO" id="GO:0016020">
    <property type="term" value="C:membrane"/>
    <property type="evidence" value="ECO:0007669"/>
    <property type="project" value="UniProtKB-KW"/>
</dbReference>
<dbReference type="GO" id="GO:0090201">
    <property type="term" value="P:negative regulation of release of cytochrome c from mitochondria"/>
    <property type="evidence" value="ECO:0000314"/>
    <property type="project" value="CACAO"/>
</dbReference>
<dbReference type="GO" id="GO:0033668">
    <property type="term" value="P:symbiont-mediated suppression of host apoptosis"/>
    <property type="evidence" value="ECO:0000314"/>
    <property type="project" value="CACAO"/>
</dbReference>
<dbReference type="GO" id="GO:0140321">
    <property type="term" value="P:symbiont-mediated suppression of host autophagy"/>
    <property type="evidence" value="ECO:0007669"/>
    <property type="project" value="UniProtKB-KW"/>
</dbReference>
<dbReference type="Gene3D" id="1.10.437.10">
    <property type="entry name" value="Blc2-like"/>
    <property type="match status" value="1"/>
</dbReference>
<dbReference type="InterPro" id="IPR036834">
    <property type="entry name" value="Bcl-2-like_sf"/>
</dbReference>
<dbReference type="InterPro" id="IPR046371">
    <property type="entry name" value="Bcl-2_BH1-3"/>
</dbReference>
<dbReference type="InterPro" id="IPR002475">
    <property type="entry name" value="Bcl2-like"/>
</dbReference>
<dbReference type="InterPro" id="IPR020726">
    <property type="entry name" value="Bcl2_BH2_motif_CS"/>
</dbReference>
<dbReference type="Pfam" id="PF00452">
    <property type="entry name" value="Bcl-2"/>
    <property type="match status" value="1"/>
</dbReference>
<dbReference type="SUPFAM" id="SSF56854">
    <property type="entry name" value="Bcl-2 inhibitors of programmed cell death"/>
    <property type="match status" value="1"/>
</dbReference>
<dbReference type="PROSITE" id="PS50062">
    <property type="entry name" value="BCL2_FAMILY"/>
    <property type="match status" value="1"/>
</dbReference>
<dbReference type="PROSITE" id="PS01258">
    <property type="entry name" value="BH2"/>
    <property type="match status" value="1"/>
</dbReference>
<gene>
    <name type="ORF">BHRF1</name>
</gene>
<comment type="function">
    <text evidence="6 7 8">Prevents premature death of the host cell during virus production, which would otherwise reduce the amount of progeny virus. Acts as a host B-cell leukemia/lymphoma 2 (Bcl-2) homolog, and interacts with pro-apoptotic proteins to prevent mitochondria permeabilization, release of cytochrome c and subsequent apoptosis of the host cell. In addition, plays a role in the inhibiton of host BECN1-mediated starvation-induced autophagy without affecting basal levels of autophagy (PubMed:37776275).</text>
</comment>
<comment type="subunit">
    <text evidence="2 3 4 5 6 7 8">Interacts with isoform 1 of host VRK2; this interaction is involved in protecting cells from apoptosis (PubMed:16963744). Interacts with host PRA1; this interaction seems to modulate BHRF1 anti-apoptotic activity (PubMed:11373297). Interacts with host BCL2L11 (PubMed:18084238, PubMed:19293378, PubMed:21203485). Interacts with host BAD and BBC3 (PubMed:21203485). Interacts with BALF1; BALF1 acting as a negative regulator of the survival function of BHRF1 (PubMed:11836425). Interacts with host BECN1 (PubMed:37776275).</text>
</comment>
<comment type="interaction">
    <interactant intactId="EBI-1207659">
        <id>P03182</id>
    </interactant>
    <interactant intactId="EBI-526067">
        <id>O54918</id>
        <label>Bcl2l11</label>
    </interactant>
    <organismsDiffer>true</organismsDiffer>
    <experiments>3</experiments>
</comment>
<comment type="interaction">
    <interactant intactId="EBI-1207659">
        <id>P03182</id>
    </interactant>
    <interactant intactId="EBI-1207615">
        <id>Q86Y07</id>
        <label>VRK2</label>
    </interactant>
    <organismsDiffer>true</organismsDiffer>
    <experiments>7</experiments>
</comment>
<comment type="subcellular location">
    <subcellularLocation>
        <location evidence="10">Host membrane</location>
        <topology evidence="10">Single-pass membrane protein</topology>
    </subcellularLocation>
    <subcellularLocation>
        <location evidence="3 9">Host mitochondrion</location>
    </subcellularLocation>
    <text>also observed in the perinuclear region of the cell.</text>
</comment>
<comment type="miscellaneous">
    <text>EA-R is part of the restricted EA-complex.</text>
</comment>
<comment type="similarity">
    <text evidence="10">Belongs to the Bcl-2 family.</text>
</comment>
<evidence type="ECO:0000255" key="1"/>
<evidence type="ECO:0000269" key="2">
    <source>
    </source>
</evidence>
<evidence type="ECO:0000269" key="3">
    <source>
    </source>
</evidence>
<evidence type="ECO:0000269" key="4">
    <source>
    </source>
</evidence>
<evidence type="ECO:0000269" key="5">
    <source>
    </source>
</evidence>
<evidence type="ECO:0000269" key="6">
    <source>
    </source>
</evidence>
<evidence type="ECO:0000269" key="7">
    <source>
    </source>
</evidence>
<evidence type="ECO:0000269" key="8">
    <source>
    </source>
</evidence>
<evidence type="ECO:0000269" key="9">
    <source>
    </source>
</evidence>
<evidence type="ECO:0000305" key="10"/>
<evidence type="ECO:0007829" key="11">
    <source>
        <dbReference type="PDB" id="1Q59"/>
    </source>
</evidence>
<evidence type="ECO:0007829" key="12">
    <source>
        <dbReference type="PDB" id="7P9W"/>
    </source>
</evidence>
<protein>
    <recommendedName>
        <fullName>Apoptosis regulator BHRF1</fullName>
    </recommendedName>
    <alternativeName>
        <fullName>Early antigen protein R</fullName>
        <shortName>EA-R</shortName>
    </alternativeName>
    <alternativeName>
        <fullName>Nuclear antigen</fullName>
    </alternativeName>
</protein>
<sequence length="191" mass="21893">MAYSTREILLALCIRDSRVHGNGTLHPVLELAARETPLRLSPEDTVVLRYHVLLEEIIERNSETFTETWNRFITHTEHVDLDFNSVFLEIFHRGDPSLGRALAWMAWCMHACRTLCCNQSTPYYVVDLSVRGMLEASEGLDGWIHQQGGWSTLIEDNIPGSRRFSWTLFLAGLTLSLLVICSYLFISRGRH</sequence>
<keyword id="KW-0002">3D-structure</keyword>
<keyword id="KW-0053">Apoptosis</keyword>
<keyword id="KW-0244">Early protein</keyword>
<keyword id="KW-0325">Glycoprotein</keyword>
<keyword id="KW-1043">Host membrane</keyword>
<keyword id="KW-1045">Host mitochondrion</keyword>
<keyword id="KW-0945">Host-virus interaction</keyword>
<keyword id="KW-1081">Inhibition of host apoptosis by viral BCL2-like protein</keyword>
<keyword id="KW-1083">Inhibition of host autophagy by virus</keyword>
<keyword id="KW-0472">Membrane</keyword>
<keyword id="KW-1119">Modulation of host cell apoptosis by virus</keyword>
<keyword id="KW-1185">Reference proteome</keyword>
<keyword id="KW-0812">Transmembrane</keyword>
<keyword id="KW-1133">Transmembrane helix</keyword>
<feature type="chain" id="PRO_0000143091" description="Apoptosis regulator BHRF1">
    <location>
        <begin position="1"/>
        <end position="191"/>
    </location>
</feature>
<feature type="transmembrane region" description="Helical" evidence="1">
    <location>
        <begin position="166"/>
        <end position="186"/>
    </location>
</feature>
<feature type="region of interest" description="Interaction with host VRK2">
    <location>
        <begin position="1"/>
        <end position="18"/>
    </location>
</feature>
<feature type="region of interest" description="Interaction with host VRK2">
    <location>
        <begin position="89"/>
        <end position="142"/>
    </location>
</feature>
<feature type="short sequence motif" description="BH1">
    <location>
        <begin position="89"/>
        <end position="109"/>
    </location>
</feature>
<feature type="short sequence motif" description="BH2">
    <location>
        <begin position="142"/>
        <end position="157"/>
    </location>
</feature>
<feature type="glycosylation site" description="N-linked (GlcNAc...) asparagine; by host" evidence="1">
    <location>
        <position position="22"/>
    </location>
</feature>
<feature type="glycosylation site" description="N-linked (GlcNAc...) asparagine; by host" evidence="1">
    <location>
        <position position="118"/>
    </location>
</feature>
<feature type="helix" evidence="12">
    <location>
        <begin position="5"/>
        <end position="18"/>
    </location>
</feature>
<feature type="strand" evidence="11">
    <location>
        <begin position="22"/>
        <end position="24"/>
    </location>
</feature>
<feature type="helix" evidence="12">
    <location>
        <begin position="27"/>
        <end position="35"/>
    </location>
</feature>
<feature type="helix" evidence="12">
    <location>
        <begin position="45"/>
        <end position="60"/>
    </location>
</feature>
<feature type="helix" evidence="12">
    <location>
        <begin position="62"/>
        <end position="75"/>
    </location>
</feature>
<feature type="helix" evidence="12">
    <location>
        <begin position="79"/>
        <end position="90"/>
    </location>
</feature>
<feature type="helix" evidence="12">
    <location>
        <begin position="98"/>
        <end position="117"/>
    </location>
</feature>
<feature type="strand" evidence="11">
    <location>
        <begin position="118"/>
        <end position="121"/>
    </location>
</feature>
<feature type="helix" evidence="12">
    <location>
        <begin position="123"/>
        <end position="137"/>
    </location>
</feature>
<feature type="helix" evidence="12">
    <location>
        <begin position="138"/>
        <end position="140"/>
    </location>
</feature>
<feature type="helix" evidence="12">
    <location>
        <begin position="141"/>
        <end position="146"/>
    </location>
</feature>
<feature type="helix" evidence="12">
    <location>
        <begin position="150"/>
        <end position="156"/>
    </location>
</feature>
<organismHost>
    <name type="scientific">Homo sapiens</name>
    <name type="common">Human</name>
    <dbReference type="NCBI Taxonomy" id="9606"/>
</organismHost>